<comment type="function">
    <text evidence="1">Conversion of glycerol 3-phosphate to dihydroxyacetone. Uses fumarate or nitrate as electron acceptor.</text>
</comment>
<comment type="catalytic activity">
    <reaction evidence="1">
        <text>a quinone + sn-glycerol 3-phosphate = dihydroxyacetone phosphate + a quinol</text>
        <dbReference type="Rhea" id="RHEA:18977"/>
        <dbReference type="ChEBI" id="CHEBI:24646"/>
        <dbReference type="ChEBI" id="CHEBI:57597"/>
        <dbReference type="ChEBI" id="CHEBI:57642"/>
        <dbReference type="ChEBI" id="CHEBI:132124"/>
        <dbReference type="EC" id="1.1.5.3"/>
    </reaction>
</comment>
<comment type="cofactor">
    <cofactor evidence="1">
        <name>FMN</name>
        <dbReference type="ChEBI" id="CHEBI:58210"/>
    </cofactor>
</comment>
<comment type="pathway">
    <text evidence="1">Polyol metabolism; glycerol degradation via glycerol kinase pathway; glycerone phosphate from sn-glycerol 3-phosphate (anaerobic route): step 1/1.</text>
</comment>
<comment type="subunit">
    <text evidence="1">Composed of a catalytic GlpA/B dimer and of membrane bound GlpC.</text>
</comment>
<comment type="similarity">
    <text evidence="1">Belongs to the anaerobic G-3-P dehydrogenase subunit B family.</text>
</comment>
<keyword id="KW-0285">Flavoprotein</keyword>
<keyword id="KW-0288">FMN</keyword>
<keyword id="KW-0560">Oxidoreductase</keyword>
<organism>
    <name type="scientific">Haemophilus influenzae (strain 86-028NP)</name>
    <dbReference type="NCBI Taxonomy" id="281310"/>
    <lineage>
        <taxon>Bacteria</taxon>
        <taxon>Pseudomonadati</taxon>
        <taxon>Pseudomonadota</taxon>
        <taxon>Gammaproteobacteria</taxon>
        <taxon>Pasteurellales</taxon>
        <taxon>Pasteurellaceae</taxon>
        <taxon>Haemophilus</taxon>
    </lineage>
</organism>
<name>GLPB_HAEI8</name>
<sequence>MNFDVAIIGGGLAGLTCGIALQQCGKRCVIINNGQAAIDFASGSLDLLSRMPSTTYGENRAVENLKENITALRNELPAHPYSLLGAEKVLAKAQDFERLANELNLDLIGSTEKNHWRVTGLGSLRGAWLSPNSVPTVQGNEPFPHKRIAVLGIEGYHDFQPQLLAANLVLNPQFEHCEVTSGFLNIPQLDELRKNAREFRSVNISQLLEHKLAFNDLVKEIIESAQGAEAVFLPACFGLENQEFMTALRDATKLALFELPTLPPSLLGMRQRIQLRHKFESLGGLMINGDSALNATFEGNKVRCINTRLLENEEITADNFVLASGSFFSKGLISEFDKIYEPVFESDIIGVEGFNQKDRFTWTVHRFAHPQPYQSAGVAINAQCQVQKCGQFLTNLYAVGNVIGGFNALELGCGSGVAVVTALAVADEILAK</sequence>
<protein>
    <recommendedName>
        <fullName evidence="1">Anaerobic glycerol-3-phosphate dehydrogenase subunit B</fullName>
        <shortName evidence="1">Anaerobic G-3-P dehydrogenase subunit B</shortName>
        <shortName evidence="1">Anaerobic G3Pdhase B</shortName>
        <ecNumber evidence="1">1.1.5.3</ecNumber>
    </recommendedName>
</protein>
<gene>
    <name evidence="1" type="primary">glpB</name>
    <name type="ordered locus">NTHI0806</name>
</gene>
<evidence type="ECO:0000255" key="1">
    <source>
        <dbReference type="HAMAP-Rule" id="MF_00753"/>
    </source>
</evidence>
<proteinExistence type="inferred from homology"/>
<accession>Q4QMN2</accession>
<feature type="chain" id="PRO_0000258902" description="Anaerobic glycerol-3-phosphate dehydrogenase subunit B">
    <location>
        <begin position="1"/>
        <end position="432"/>
    </location>
</feature>
<dbReference type="EC" id="1.1.5.3" evidence="1"/>
<dbReference type="EMBL" id="CP000057">
    <property type="protein sequence ID" value="AAX87715.1"/>
    <property type="molecule type" value="Genomic_DNA"/>
</dbReference>
<dbReference type="RefSeq" id="WP_011272168.1">
    <property type="nucleotide sequence ID" value="NC_007146.2"/>
</dbReference>
<dbReference type="KEGG" id="hit:NTHI0806"/>
<dbReference type="HOGENOM" id="CLU_047793_0_0_6"/>
<dbReference type="UniPathway" id="UPA00618">
    <property type="reaction ID" value="UER00673"/>
</dbReference>
<dbReference type="Proteomes" id="UP000002525">
    <property type="component" value="Chromosome"/>
</dbReference>
<dbReference type="GO" id="GO:0009331">
    <property type="term" value="C:glycerol-3-phosphate dehydrogenase (FAD) complex"/>
    <property type="evidence" value="ECO:0007669"/>
    <property type="project" value="InterPro"/>
</dbReference>
<dbReference type="GO" id="GO:0004368">
    <property type="term" value="F:glycerol-3-phosphate dehydrogenase (quinone) activity"/>
    <property type="evidence" value="ECO:0007669"/>
    <property type="project" value="UniProtKB-UniRule"/>
</dbReference>
<dbReference type="GO" id="GO:0019563">
    <property type="term" value="P:glycerol catabolic process"/>
    <property type="evidence" value="ECO:0007669"/>
    <property type="project" value="UniProtKB-UniRule"/>
</dbReference>
<dbReference type="Gene3D" id="3.50.50.60">
    <property type="entry name" value="FAD/NAD(P)-binding domain"/>
    <property type="match status" value="1"/>
</dbReference>
<dbReference type="HAMAP" id="MF_00753">
    <property type="entry name" value="Glycerol3P_GlpB"/>
    <property type="match status" value="1"/>
</dbReference>
<dbReference type="InterPro" id="IPR003953">
    <property type="entry name" value="FAD-dep_OxRdtase_2_FAD-bd"/>
</dbReference>
<dbReference type="InterPro" id="IPR050315">
    <property type="entry name" value="FAD-oxidoreductase_2"/>
</dbReference>
<dbReference type="InterPro" id="IPR036188">
    <property type="entry name" value="FAD/NAD-bd_sf"/>
</dbReference>
<dbReference type="InterPro" id="IPR009158">
    <property type="entry name" value="G3P_DH_GlpB_su"/>
</dbReference>
<dbReference type="NCBIfam" id="TIGR03378">
    <property type="entry name" value="glycerol3P_GlpB"/>
    <property type="match status" value="1"/>
</dbReference>
<dbReference type="NCBIfam" id="NF003719">
    <property type="entry name" value="PRK05329.1-2"/>
    <property type="match status" value="1"/>
</dbReference>
<dbReference type="NCBIfam" id="NF003720">
    <property type="entry name" value="PRK05329.1-3"/>
    <property type="match status" value="1"/>
</dbReference>
<dbReference type="NCBIfam" id="NF003721">
    <property type="entry name" value="PRK05329.1-4"/>
    <property type="match status" value="1"/>
</dbReference>
<dbReference type="PANTHER" id="PTHR43400:SF11">
    <property type="entry name" value="ANAEROBIC GLYCEROL-3-PHOSPHATE DEHYDROGENASE SUBUNIT B"/>
    <property type="match status" value="1"/>
</dbReference>
<dbReference type="PANTHER" id="PTHR43400">
    <property type="entry name" value="FUMARATE REDUCTASE"/>
    <property type="match status" value="1"/>
</dbReference>
<dbReference type="Pfam" id="PF00890">
    <property type="entry name" value="FAD_binding_2"/>
    <property type="match status" value="1"/>
</dbReference>
<dbReference type="PIRSF" id="PIRSF000141">
    <property type="entry name" value="Anaerobic_G3P_dh"/>
    <property type="match status" value="1"/>
</dbReference>
<dbReference type="SUPFAM" id="SSF51905">
    <property type="entry name" value="FAD/NAD(P)-binding domain"/>
    <property type="match status" value="1"/>
</dbReference>
<reference key="1">
    <citation type="journal article" date="2005" name="J. Bacteriol.">
        <title>Genomic sequence of an otitis media isolate of nontypeable Haemophilus influenzae: comparative study with H. influenzae serotype d, strain KW20.</title>
        <authorList>
            <person name="Harrison A."/>
            <person name="Dyer D.W."/>
            <person name="Gillaspy A."/>
            <person name="Ray W.C."/>
            <person name="Mungur R."/>
            <person name="Carson M.B."/>
            <person name="Zhong H."/>
            <person name="Gipson J."/>
            <person name="Gipson M."/>
            <person name="Johnson L.S."/>
            <person name="Lewis L."/>
            <person name="Bakaletz L.O."/>
            <person name="Munson R.S. Jr."/>
        </authorList>
    </citation>
    <scope>NUCLEOTIDE SEQUENCE [LARGE SCALE GENOMIC DNA]</scope>
    <source>
        <strain>86-028NP</strain>
    </source>
</reference>